<keyword id="KW-0687">Ribonucleoprotein</keyword>
<keyword id="KW-0689">Ribosomal protein</keyword>
<keyword id="KW-0694">RNA-binding</keyword>
<keyword id="KW-0699">rRNA-binding</keyword>
<evidence type="ECO:0000255" key="1">
    <source>
        <dbReference type="HAMAP-Rule" id="MF_01306"/>
    </source>
</evidence>
<evidence type="ECO:0000256" key="2">
    <source>
        <dbReference type="SAM" id="MobiDB-lite"/>
    </source>
</evidence>
<evidence type="ECO:0000305" key="3"/>
<gene>
    <name evidence="1" type="primary">rps4</name>
    <name type="ordered locus">Mbar_A0077</name>
</gene>
<sequence>MAYPGKKSKSFETPRHPWQEARMASEVQLVKAYGLRNKREVWKAASTLRMYRSEARRLLASAANSQERGLEGHQKTQSEEILAKLIRYGIIKSDADIDDILSLKTENILERRLQTQVLRLGLARTVVQARQFITHGHIAINGRKATVPGMLVSKEDEMHIGYYATSPLVSESHPERPVQVASVLADSTTTLRAVAEAKQAKEKPPERGGRKRRGRR</sequence>
<organism>
    <name type="scientific">Methanosarcina barkeri (strain Fusaro / DSM 804)</name>
    <dbReference type="NCBI Taxonomy" id="269797"/>
    <lineage>
        <taxon>Archaea</taxon>
        <taxon>Methanobacteriati</taxon>
        <taxon>Methanobacteriota</taxon>
        <taxon>Stenosarchaea group</taxon>
        <taxon>Methanomicrobia</taxon>
        <taxon>Methanosarcinales</taxon>
        <taxon>Methanosarcinaceae</taxon>
        <taxon>Methanosarcina</taxon>
    </lineage>
</organism>
<reference key="1">
    <citation type="journal article" date="2006" name="J. Bacteriol.">
        <title>The Methanosarcina barkeri genome: comparative analysis with Methanosarcina acetivorans and Methanosarcina mazei reveals extensive rearrangement within methanosarcinal genomes.</title>
        <authorList>
            <person name="Maeder D.L."/>
            <person name="Anderson I."/>
            <person name="Brettin T.S."/>
            <person name="Bruce D.C."/>
            <person name="Gilna P."/>
            <person name="Han C.S."/>
            <person name="Lapidus A."/>
            <person name="Metcalf W.W."/>
            <person name="Saunders E."/>
            <person name="Tapia R."/>
            <person name="Sowers K.R."/>
        </authorList>
    </citation>
    <scope>NUCLEOTIDE SEQUENCE [LARGE SCALE GENOMIC DNA]</scope>
    <source>
        <strain>Fusaro / DSM 804</strain>
    </source>
</reference>
<accession>Q46GC8</accession>
<name>RS4_METBF</name>
<comment type="function">
    <text evidence="1">One of the primary rRNA binding proteins, it binds directly to 16S rRNA where it nucleates assembly of the body of the 30S subunit.</text>
</comment>
<comment type="function">
    <text evidence="1">With S5 and S12 plays an important role in translational accuracy.</text>
</comment>
<comment type="subunit">
    <text evidence="1">Part of the 30S ribosomal subunit. Contacts protein S5. The interaction surface between S4 and S5 is involved in control of translational fidelity.</text>
</comment>
<comment type="similarity">
    <text evidence="1">Belongs to the universal ribosomal protein uS4 family.</text>
</comment>
<proteinExistence type="inferred from homology"/>
<dbReference type="EMBL" id="CP000099">
    <property type="protein sequence ID" value="AAZ69064.1"/>
    <property type="molecule type" value="Genomic_DNA"/>
</dbReference>
<dbReference type="SMR" id="Q46GC8"/>
<dbReference type="STRING" id="269797.Mbar_A0077"/>
<dbReference type="PaxDb" id="269797-Mbar_A0077"/>
<dbReference type="KEGG" id="mba:Mbar_A0077"/>
<dbReference type="eggNOG" id="arCOG04239">
    <property type="taxonomic scope" value="Archaea"/>
</dbReference>
<dbReference type="HOGENOM" id="CLU_089738_1_1_2"/>
<dbReference type="OrthoDB" id="10429at2157"/>
<dbReference type="GO" id="GO:0015935">
    <property type="term" value="C:small ribosomal subunit"/>
    <property type="evidence" value="ECO:0007669"/>
    <property type="project" value="InterPro"/>
</dbReference>
<dbReference type="GO" id="GO:0019843">
    <property type="term" value="F:rRNA binding"/>
    <property type="evidence" value="ECO:0007669"/>
    <property type="project" value="UniProtKB-UniRule"/>
</dbReference>
<dbReference type="GO" id="GO:0003735">
    <property type="term" value="F:structural constituent of ribosome"/>
    <property type="evidence" value="ECO:0007669"/>
    <property type="project" value="InterPro"/>
</dbReference>
<dbReference type="GO" id="GO:0042274">
    <property type="term" value="P:ribosomal small subunit biogenesis"/>
    <property type="evidence" value="ECO:0007669"/>
    <property type="project" value="TreeGrafter"/>
</dbReference>
<dbReference type="GO" id="GO:0006412">
    <property type="term" value="P:translation"/>
    <property type="evidence" value="ECO:0007669"/>
    <property type="project" value="UniProtKB-UniRule"/>
</dbReference>
<dbReference type="CDD" id="cd00165">
    <property type="entry name" value="S4"/>
    <property type="match status" value="1"/>
</dbReference>
<dbReference type="FunFam" id="3.10.290.10:FF:000026">
    <property type="entry name" value="30S ribosomal protein S4"/>
    <property type="match status" value="1"/>
</dbReference>
<dbReference type="Gene3D" id="3.10.290.10">
    <property type="entry name" value="RNA-binding S4 domain"/>
    <property type="match status" value="1"/>
</dbReference>
<dbReference type="HAMAP" id="MF_01306_A">
    <property type="entry name" value="Ribosomal_uS4_A"/>
    <property type="match status" value="1"/>
</dbReference>
<dbReference type="InterPro" id="IPR022801">
    <property type="entry name" value="Ribosomal_uS4"/>
</dbReference>
<dbReference type="InterPro" id="IPR022802">
    <property type="entry name" value="Ribosomal_uS4_arc"/>
</dbReference>
<dbReference type="InterPro" id="IPR018079">
    <property type="entry name" value="Ribosomal_uS4_CS"/>
</dbReference>
<dbReference type="InterPro" id="IPR005710">
    <property type="entry name" value="Ribosomal_uS4_euk/arc"/>
</dbReference>
<dbReference type="InterPro" id="IPR001912">
    <property type="entry name" value="Ribosomal_uS4_N"/>
</dbReference>
<dbReference type="InterPro" id="IPR002942">
    <property type="entry name" value="S4_RNA-bd"/>
</dbReference>
<dbReference type="InterPro" id="IPR036986">
    <property type="entry name" value="S4_RNA-bd_sf"/>
</dbReference>
<dbReference type="NCBIfam" id="NF003139">
    <property type="entry name" value="PRK04051.1"/>
    <property type="match status" value="1"/>
</dbReference>
<dbReference type="NCBIfam" id="TIGR01018">
    <property type="entry name" value="uS4_arch"/>
    <property type="match status" value="1"/>
</dbReference>
<dbReference type="PANTHER" id="PTHR11831">
    <property type="entry name" value="30S 40S RIBOSOMAL PROTEIN"/>
    <property type="match status" value="1"/>
</dbReference>
<dbReference type="PANTHER" id="PTHR11831:SF5">
    <property type="entry name" value="40S RIBOSOMAL PROTEIN S9"/>
    <property type="match status" value="1"/>
</dbReference>
<dbReference type="Pfam" id="PF01479">
    <property type="entry name" value="S4"/>
    <property type="match status" value="1"/>
</dbReference>
<dbReference type="SMART" id="SM01390">
    <property type="entry name" value="Ribosomal_S4"/>
    <property type="match status" value="1"/>
</dbReference>
<dbReference type="SMART" id="SM00363">
    <property type="entry name" value="S4"/>
    <property type="match status" value="1"/>
</dbReference>
<dbReference type="SUPFAM" id="SSF55174">
    <property type="entry name" value="Alpha-L RNA-binding motif"/>
    <property type="match status" value="1"/>
</dbReference>
<dbReference type="PROSITE" id="PS00632">
    <property type="entry name" value="RIBOSOMAL_S4"/>
    <property type="match status" value="1"/>
</dbReference>
<dbReference type="PROSITE" id="PS50889">
    <property type="entry name" value="S4"/>
    <property type="match status" value="1"/>
</dbReference>
<feature type="chain" id="PRO_0000228942" description="Small ribosomal subunit protein uS4">
    <location>
        <begin position="1"/>
        <end position="216"/>
    </location>
</feature>
<feature type="domain" description="S4 RNA-binding" evidence="1">
    <location>
        <begin position="111"/>
        <end position="175"/>
    </location>
</feature>
<feature type="region of interest" description="Disordered" evidence="2">
    <location>
        <begin position="194"/>
        <end position="216"/>
    </location>
</feature>
<feature type="compositionally biased region" description="Basic and acidic residues" evidence="2">
    <location>
        <begin position="198"/>
        <end position="208"/>
    </location>
</feature>
<protein>
    <recommendedName>
        <fullName evidence="1">Small ribosomal subunit protein uS4</fullName>
    </recommendedName>
    <alternativeName>
        <fullName evidence="3">30S ribosomal protein S4</fullName>
    </alternativeName>
</protein>